<name>MPRA_MYCTO</name>
<feature type="chain" id="PRO_0000428334" description="Response regulator MprA">
    <location>
        <begin position="1"/>
        <end position="230"/>
    </location>
</feature>
<feature type="domain" description="Response regulatory" evidence="2">
    <location>
        <begin position="4"/>
        <end position="118"/>
    </location>
</feature>
<feature type="DNA-binding region" description="OmpR/PhoB-type" evidence="3">
    <location>
        <begin position="129"/>
        <end position="227"/>
    </location>
</feature>
<feature type="modified residue" description="4-aspartylphosphate" evidence="4">
    <location>
        <position position="48"/>
    </location>
</feature>
<keyword id="KW-0010">Activator</keyword>
<keyword id="KW-0963">Cytoplasm</keyword>
<keyword id="KW-0238">DNA-binding</keyword>
<keyword id="KW-0597">Phosphoprotein</keyword>
<keyword id="KW-1185">Reference proteome</keyword>
<keyword id="KW-0678">Repressor</keyword>
<keyword id="KW-0346">Stress response</keyword>
<keyword id="KW-0804">Transcription</keyword>
<keyword id="KW-0805">Transcription regulation</keyword>
<keyword id="KW-0902">Two-component regulatory system</keyword>
<keyword id="KW-0843">Virulence</keyword>
<organism>
    <name type="scientific">Mycobacterium tuberculosis (strain CDC 1551 / Oshkosh)</name>
    <dbReference type="NCBI Taxonomy" id="83331"/>
    <lineage>
        <taxon>Bacteria</taxon>
        <taxon>Bacillati</taxon>
        <taxon>Actinomycetota</taxon>
        <taxon>Actinomycetes</taxon>
        <taxon>Mycobacteriales</taxon>
        <taxon>Mycobacteriaceae</taxon>
        <taxon>Mycobacterium</taxon>
        <taxon>Mycobacterium tuberculosis complex</taxon>
    </lineage>
</organism>
<sequence>MSVRILVVDDDRAVRESLRRSLSFNGYSVELAHDGVEALDMIASDRPDALVLDVMMPRLDGLEVCRQLRGTGDDLPILVLTARDSVSERVAGLDAGADDYLPKPFALEELLARMRALLRRTKPEDAAESMAMRFSDLTLDPVTREVNRGQRRISLTRTEFALLEMLIANPRRVLTRSRILEEVWGFDFPTSGNALEVYVGYLRRKTEADGEPRLIHTVRGVGYVLRETPP</sequence>
<reference key="1">
    <citation type="journal article" date="2002" name="J. Bacteriol.">
        <title>Whole-genome comparison of Mycobacterium tuberculosis clinical and laboratory strains.</title>
        <authorList>
            <person name="Fleischmann R.D."/>
            <person name="Alland D."/>
            <person name="Eisen J.A."/>
            <person name="Carpenter L."/>
            <person name="White O."/>
            <person name="Peterson J.D."/>
            <person name="DeBoy R.T."/>
            <person name="Dodson R.J."/>
            <person name="Gwinn M.L."/>
            <person name="Haft D.H."/>
            <person name="Hickey E.K."/>
            <person name="Kolonay J.F."/>
            <person name="Nelson W.C."/>
            <person name="Umayam L.A."/>
            <person name="Ermolaeva M.D."/>
            <person name="Salzberg S.L."/>
            <person name="Delcher A."/>
            <person name="Utterback T.R."/>
            <person name="Weidman J.F."/>
            <person name="Khouri H.M."/>
            <person name="Gill J."/>
            <person name="Mikula A."/>
            <person name="Bishai W."/>
            <person name="Jacobs W.R. Jr."/>
            <person name="Venter J.C."/>
            <person name="Fraser C.M."/>
        </authorList>
    </citation>
    <scope>NUCLEOTIDE SEQUENCE [LARGE SCALE GENOMIC DNA]</scope>
    <source>
        <strain>CDC 1551 / Oshkosh</strain>
    </source>
</reference>
<gene>
    <name type="primary">mprA</name>
    <name type="ordered locus">MT1009</name>
</gene>
<dbReference type="EMBL" id="AE000516">
    <property type="protein sequence ID" value="AAK45257.1"/>
    <property type="molecule type" value="Genomic_DNA"/>
</dbReference>
<dbReference type="PIR" id="A70821">
    <property type="entry name" value="A70821"/>
</dbReference>
<dbReference type="SMR" id="P9WGM8"/>
<dbReference type="KEGG" id="mtc:MT1009"/>
<dbReference type="HOGENOM" id="CLU_000445_30_1_11"/>
<dbReference type="Proteomes" id="UP000001020">
    <property type="component" value="Chromosome"/>
</dbReference>
<dbReference type="GO" id="GO:0005829">
    <property type="term" value="C:cytosol"/>
    <property type="evidence" value="ECO:0007669"/>
    <property type="project" value="TreeGrafter"/>
</dbReference>
<dbReference type="GO" id="GO:0032993">
    <property type="term" value="C:protein-DNA complex"/>
    <property type="evidence" value="ECO:0007669"/>
    <property type="project" value="TreeGrafter"/>
</dbReference>
<dbReference type="GO" id="GO:0000156">
    <property type="term" value="F:phosphorelay response regulator activity"/>
    <property type="evidence" value="ECO:0007669"/>
    <property type="project" value="TreeGrafter"/>
</dbReference>
<dbReference type="GO" id="GO:0000976">
    <property type="term" value="F:transcription cis-regulatory region binding"/>
    <property type="evidence" value="ECO:0007669"/>
    <property type="project" value="TreeGrafter"/>
</dbReference>
<dbReference type="GO" id="GO:0006355">
    <property type="term" value="P:regulation of DNA-templated transcription"/>
    <property type="evidence" value="ECO:0007669"/>
    <property type="project" value="InterPro"/>
</dbReference>
<dbReference type="CDD" id="cd17627">
    <property type="entry name" value="REC_OmpR_PrrA-like"/>
    <property type="match status" value="1"/>
</dbReference>
<dbReference type="CDD" id="cd00383">
    <property type="entry name" value="trans_reg_C"/>
    <property type="match status" value="1"/>
</dbReference>
<dbReference type="FunFam" id="3.40.50.2300:FF:000001">
    <property type="entry name" value="DNA-binding response regulator PhoB"/>
    <property type="match status" value="1"/>
</dbReference>
<dbReference type="FunFam" id="1.10.10.10:FF:000005">
    <property type="entry name" value="Two-component system response regulator"/>
    <property type="match status" value="1"/>
</dbReference>
<dbReference type="Gene3D" id="3.40.50.2300">
    <property type="match status" value="1"/>
</dbReference>
<dbReference type="Gene3D" id="6.10.250.690">
    <property type="match status" value="1"/>
</dbReference>
<dbReference type="Gene3D" id="1.10.10.10">
    <property type="entry name" value="Winged helix-like DNA-binding domain superfamily/Winged helix DNA-binding domain"/>
    <property type="match status" value="1"/>
</dbReference>
<dbReference type="InterPro" id="IPR011006">
    <property type="entry name" value="CheY-like_superfamily"/>
</dbReference>
<dbReference type="InterPro" id="IPR001867">
    <property type="entry name" value="OmpR/PhoB-type_DNA-bd"/>
</dbReference>
<dbReference type="InterPro" id="IPR001789">
    <property type="entry name" value="Sig_transdc_resp-reg_receiver"/>
</dbReference>
<dbReference type="InterPro" id="IPR039420">
    <property type="entry name" value="WalR-like"/>
</dbReference>
<dbReference type="InterPro" id="IPR036388">
    <property type="entry name" value="WH-like_DNA-bd_sf"/>
</dbReference>
<dbReference type="PANTHER" id="PTHR48111">
    <property type="entry name" value="REGULATOR OF RPOS"/>
    <property type="match status" value="1"/>
</dbReference>
<dbReference type="PANTHER" id="PTHR48111:SF22">
    <property type="entry name" value="REGULATOR OF RPOS"/>
    <property type="match status" value="1"/>
</dbReference>
<dbReference type="Pfam" id="PF00072">
    <property type="entry name" value="Response_reg"/>
    <property type="match status" value="1"/>
</dbReference>
<dbReference type="Pfam" id="PF00486">
    <property type="entry name" value="Trans_reg_C"/>
    <property type="match status" value="1"/>
</dbReference>
<dbReference type="SMART" id="SM00448">
    <property type="entry name" value="REC"/>
    <property type="match status" value="1"/>
</dbReference>
<dbReference type="SMART" id="SM00862">
    <property type="entry name" value="Trans_reg_C"/>
    <property type="match status" value="1"/>
</dbReference>
<dbReference type="SUPFAM" id="SSF52172">
    <property type="entry name" value="CheY-like"/>
    <property type="match status" value="1"/>
</dbReference>
<dbReference type="PROSITE" id="PS51755">
    <property type="entry name" value="OMPR_PHOB"/>
    <property type="match status" value="1"/>
</dbReference>
<dbReference type="PROSITE" id="PS50110">
    <property type="entry name" value="RESPONSE_REGULATORY"/>
    <property type="match status" value="1"/>
</dbReference>
<evidence type="ECO:0000250" key="1"/>
<evidence type="ECO:0000255" key="2">
    <source>
        <dbReference type="PROSITE-ProRule" id="PRU00169"/>
    </source>
</evidence>
<evidence type="ECO:0000255" key="3">
    <source>
        <dbReference type="PROSITE-ProRule" id="PRU01091"/>
    </source>
</evidence>
<evidence type="ECO:0000305" key="4"/>
<protein>
    <recommendedName>
        <fullName>Response regulator MprA</fullName>
    </recommendedName>
    <alternativeName>
        <fullName>Mycobacterial persistence regulator A</fullName>
    </alternativeName>
</protein>
<comment type="function">
    <text evidence="1">Member of the two-component regulatory system MprB/MprA which contributes to maintaining a balance among several systems involved in stress resistance and is required for establishment and maintenance of persistent infection in the host.</text>
</comment>
<comment type="subunit">
    <text evidence="1">Monomer.</text>
</comment>
<comment type="subcellular location">
    <subcellularLocation>
        <location evidence="4">Cytoplasm</location>
    </subcellularLocation>
</comment>
<comment type="PTM">
    <text evidence="1">Phosphorylated and dephosphorylated by MprB.</text>
</comment>
<proteinExistence type="inferred from homology"/>
<accession>P9WGM8</accession>
<accession>L0T5H1</accession>
<accession>O53894</accession>
<accession>Q7D914</accession>